<sequence length="220" mass="25283">MKVAGVDEAGRGPVIGPLVIGVAVIDEKNIERLRDIGVKDSKQLTPGQREKLFSKLIDILDDYYVLLVTPKEIDERHHSMNELEAEKFVVALNSLRIKPQKIYVDSADVDPKRFASLIKAGLKYEATVIAEHKADAKYEIVSAASIIAKVTRDREIEKLKQKYGEFGSGYPSDPRTKEWLEEYYKQYGDFPPIVRRTWETARKIEERFRKNQLTLDKFLK</sequence>
<proteinExistence type="evidence at protein level"/>
<dbReference type="EC" id="3.1.26.4"/>
<dbReference type="EMBL" id="BA000001">
    <property type="protein sequence ID" value="BAA30762.1"/>
    <property type="molecule type" value="Genomic_DNA"/>
</dbReference>
<dbReference type="PIR" id="B71045">
    <property type="entry name" value="B71045"/>
</dbReference>
<dbReference type="RefSeq" id="WP_010885718.1">
    <property type="nucleotide sequence ID" value="NC_000961.1"/>
</dbReference>
<dbReference type="PDB" id="1UAX">
    <property type="method" value="X-ray"/>
    <property type="resolution" value="2.00 A"/>
    <property type="chains" value="A/B=1-220"/>
</dbReference>
<dbReference type="PDBsum" id="1UAX"/>
<dbReference type="SMR" id="O59351"/>
<dbReference type="STRING" id="70601.gene:9378643"/>
<dbReference type="EnsemblBacteria" id="BAA30762">
    <property type="protein sequence ID" value="BAA30762"/>
    <property type="gene ID" value="BAA30762"/>
</dbReference>
<dbReference type="GeneID" id="1442499"/>
<dbReference type="KEGG" id="pho:PH1650"/>
<dbReference type="eggNOG" id="arCOG04121">
    <property type="taxonomic scope" value="Archaea"/>
</dbReference>
<dbReference type="OrthoDB" id="33866at2157"/>
<dbReference type="BRENDA" id="3.1.26.4">
    <property type="organism ID" value="7183"/>
</dbReference>
<dbReference type="EvolutionaryTrace" id="O59351"/>
<dbReference type="Proteomes" id="UP000000752">
    <property type="component" value="Chromosome"/>
</dbReference>
<dbReference type="GO" id="GO:0005737">
    <property type="term" value="C:cytoplasm"/>
    <property type="evidence" value="ECO:0007669"/>
    <property type="project" value="UniProtKB-SubCell"/>
</dbReference>
<dbReference type="GO" id="GO:0032299">
    <property type="term" value="C:ribonuclease H2 complex"/>
    <property type="evidence" value="ECO:0007669"/>
    <property type="project" value="TreeGrafter"/>
</dbReference>
<dbReference type="GO" id="GO:0030145">
    <property type="term" value="F:manganese ion binding"/>
    <property type="evidence" value="ECO:0007669"/>
    <property type="project" value="UniProtKB-UniRule"/>
</dbReference>
<dbReference type="GO" id="GO:0003723">
    <property type="term" value="F:RNA binding"/>
    <property type="evidence" value="ECO:0007669"/>
    <property type="project" value="InterPro"/>
</dbReference>
<dbReference type="GO" id="GO:0004523">
    <property type="term" value="F:RNA-DNA hybrid ribonuclease activity"/>
    <property type="evidence" value="ECO:0007669"/>
    <property type="project" value="UniProtKB-UniRule"/>
</dbReference>
<dbReference type="GO" id="GO:0043137">
    <property type="term" value="P:DNA replication, removal of RNA primer"/>
    <property type="evidence" value="ECO:0007669"/>
    <property type="project" value="TreeGrafter"/>
</dbReference>
<dbReference type="GO" id="GO:0006298">
    <property type="term" value="P:mismatch repair"/>
    <property type="evidence" value="ECO:0007669"/>
    <property type="project" value="TreeGrafter"/>
</dbReference>
<dbReference type="CDD" id="cd07180">
    <property type="entry name" value="RNase_HII_archaea_like"/>
    <property type="match status" value="1"/>
</dbReference>
<dbReference type="FunFam" id="1.10.10.460:FF:000001">
    <property type="entry name" value="Ribonuclease"/>
    <property type="match status" value="1"/>
</dbReference>
<dbReference type="Gene3D" id="3.30.420.10">
    <property type="entry name" value="Ribonuclease H-like superfamily/Ribonuclease H"/>
    <property type="match status" value="1"/>
</dbReference>
<dbReference type="HAMAP" id="MF_00052_A">
    <property type="entry name" value="RNase_HII_A"/>
    <property type="match status" value="1"/>
</dbReference>
<dbReference type="InterPro" id="IPR004649">
    <property type="entry name" value="RNase_H2_suA"/>
</dbReference>
<dbReference type="InterPro" id="IPR001352">
    <property type="entry name" value="RNase_HII/HIII"/>
</dbReference>
<dbReference type="InterPro" id="IPR024567">
    <property type="entry name" value="RNase_HII/HIII_dom"/>
</dbReference>
<dbReference type="InterPro" id="IPR020787">
    <property type="entry name" value="RNase_HII_arc"/>
</dbReference>
<dbReference type="InterPro" id="IPR012337">
    <property type="entry name" value="RNaseH-like_sf"/>
</dbReference>
<dbReference type="InterPro" id="IPR036397">
    <property type="entry name" value="RNaseH_sf"/>
</dbReference>
<dbReference type="NCBIfam" id="TIGR00729">
    <property type="entry name" value="ribonuclease HII"/>
    <property type="match status" value="1"/>
</dbReference>
<dbReference type="PANTHER" id="PTHR10954:SF23">
    <property type="entry name" value="RIBONUCLEASE"/>
    <property type="match status" value="1"/>
</dbReference>
<dbReference type="PANTHER" id="PTHR10954">
    <property type="entry name" value="RIBONUCLEASE H2 SUBUNIT A"/>
    <property type="match status" value="1"/>
</dbReference>
<dbReference type="Pfam" id="PF01351">
    <property type="entry name" value="RNase_HII"/>
    <property type="match status" value="1"/>
</dbReference>
<dbReference type="SUPFAM" id="SSF53098">
    <property type="entry name" value="Ribonuclease H-like"/>
    <property type="match status" value="1"/>
</dbReference>
<dbReference type="PROSITE" id="PS51975">
    <property type="entry name" value="RNASE_H_2"/>
    <property type="match status" value="1"/>
</dbReference>
<feature type="chain" id="PRO_0000111670" description="Ribonuclease HII">
    <location>
        <begin position="1"/>
        <end position="220"/>
    </location>
</feature>
<feature type="domain" description="RNase H type-2" evidence="2">
    <location>
        <begin position="1"/>
        <end position="210"/>
    </location>
</feature>
<feature type="binding site" evidence="1">
    <location>
        <position position="7"/>
    </location>
    <ligand>
        <name>a divalent metal cation</name>
        <dbReference type="ChEBI" id="CHEBI:60240"/>
    </ligand>
</feature>
<feature type="binding site" evidence="1">
    <location>
        <position position="8"/>
    </location>
    <ligand>
        <name>a divalent metal cation</name>
        <dbReference type="ChEBI" id="CHEBI:60240"/>
    </ligand>
</feature>
<feature type="binding site" evidence="1">
    <location>
        <position position="105"/>
    </location>
    <ligand>
        <name>a divalent metal cation</name>
        <dbReference type="ChEBI" id="CHEBI:60240"/>
    </ligand>
</feature>
<feature type="strand" evidence="4">
    <location>
        <begin position="2"/>
        <end position="9"/>
    </location>
</feature>
<feature type="strand" evidence="4">
    <location>
        <begin position="14"/>
        <end position="16"/>
    </location>
</feature>
<feature type="strand" evidence="4">
    <location>
        <begin position="18"/>
        <end position="26"/>
    </location>
</feature>
<feature type="helix" evidence="4">
    <location>
        <begin position="27"/>
        <end position="29"/>
    </location>
</feature>
<feature type="helix" evidence="4">
    <location>
        <begin position="30"/>
        <end position="36"/>
    </location>
</feature>
<feature type="helix" evidence="4">
    <location>
        <begin position="38"/>
        <end position="40"/>
    </location>
</feature>
<feature type="helix" evidence="4">
    <location>
        <begin position="46"/>
        <end position="59"/>
    </location>
</feature>
<feature type="strand" evidence="4">
    <location>
        <begin position="60"/>
        <end position="68"/>
    </location>
</feature>
<feature type="helix" evidence="4">
    <location>
        <begin position="70"/>
        <end position="74"/>
    </location>
</feature>
<feature type="helix" evidence="4">
    <location>
        <begin position="80"/>
        <end position="93"/>
    </location>
</feature>
<feature type="strand" evidence="4">
    <location>
        <begin position="100"/>
        <end position="105"/>
    </location>
</feature>
<feature type="helix" evidence="4">
    <location>
        <begin position="111"/>
        <end position="121"/>
    </location>
</feature>
<feature type="strand" evidence="4">
    <location>
        <begin position="127"/>
        <end position="131"/>
    </location>
</feature>
<feature type="helix" evidence="4">
    <location>
        <begin position="134"/>
        <end position="137"/>
    </location>
</feature>
<feature type="helix" evidence="4">
    <location>
        <begin position="139"/>
        <end position="163"/>
    </location>
</feature>
<feature type="helix" evidence="4">
    <location>
        <begin position="174"/>
        <end position="187"/>
    </location>
</feature>
<feature type="helix" evidence="4">
    <location>
        <begin position="199"/>
        <end position="208"/>
    </location>
</feature>
<comment type="function">
    <text evidence="1">Endonuclease that specifically degrades the RNA of RNA-DNA hybrids.</text>
</comment>
<comment type="catalytic activity">
    <reaction>
        <text>Endonucleolytic cleavage to 5'-phosphomonoester.</text>
        <dbReference type="EC" id="3.1.26.4"/>
    </reaction>
</comment>
<comment type="cofactor">
    <cofactor evidence="1">
        <name>Mn(2+)</name>
        <dbReference type="ChEBI" id="CHEBI:29035"/>
    </cofactor>
    <cofactor evidence="1">
        <name>Mg(2+)</name>
        <dbReference type="ChEBI" id="CHEBI:18420"/>
    </cofactor>
    <text evidence="1">Manganese or magnesium. Binds 1 divalent metal ion per monomer in the absence of substrate. May bind a second metal ion after substrate binding.</text>
</comment>
<comment type="subcellular location">
    <subcellularLocation>
        <location evidence="3">Cytoplasm</location>
    </subcellularLocation>
</comment>
<comment type="similarity">
    <text evidence="3">Belongs to the RNase HII family.</text>
</comment>
<organism>
    <name type="scientific">Pyrococcus horikoshii (strain ATCC 700860 / DSM 12428 / JCM 9974 / NBRC 100139 / OT-3)</name>
    <dbReference type="NCBI Taxonomy" id="70601"/>
    <lineage>
        <taxon>Archaea</taxon>
        <taxon>Methanobacteriati</taxon>
        <taxon>Methanobacteriota</taxon>
        <taxon>Thermococci</taxon>
        <taxon>Thermococcales</taxon>
        <taxon>Thermococcaceae</taxon>
        <taxon>Pyrococcus</taxon>
    </lineage>
</organism>
<name>RNH2_PYRHO</name>
<reference key="1">
    <citation type="journal article" date="1998" name="DNA Res.">
        <title>Complete sequence and gene organization of the genome of a hyper-thermophilic archaebacterium, Pyrococcus horikoshii OT3.</title>
        <authorList>
            <person name="Kawarabayasi Y."/>
            <person name="Sawada M."/>
            <person name="Horikawa H."/>
            <person name="Haikawa Y."/>
            <person name="Hino Y."/>
            <person name="Yamamoto S."/>
            <person name="Sekine M."/>
            <person name="Baba S."/>
            <person name="Kosugi H."/>
            <person name="Hosoyama A."/>
            <person name="Nagai Y."/>
            <person name="Sakai M."/>
            <person name="Ogura K."/>
            <person name="Otsuka R."/>
            <person name="Nakazawa H."/>
            <person name="Takamiya M."/>
            <person name="Ohfuku Y."/>
            <person name="Funahashi T."/>
            <person name="Tanaka T."/>
            <person name="Kudoh Y."/>
            <person name="Yamazaki J."/>
            <person name="Kushida N."/>
            <person name="Oguchi A."/>
            <person name="Aoki K."/>
            <person name="Yoshizawa T."/>
            <person name="Nakamura Y."/>
            <person name="Robb F.T."/>
            <person name="Horikoshi K."/>
            <person name="Masuchi Y."/>
            <person name="Shizuya H."/>
            <person name="Kikuchi H."/>
        </authorList>
    </citation>
    <scope>NUCLEOTIDE SEQUENCE [LARGE SCALE GENOMIC DNA]</scope>
    <source>
        <strain>ATCC 700860 / DSM 12428 / JCM 9974 / NBRC 100139 / OT-3</strain>
    </source>
</reference>
<evidence type="ECO:0000250" key="1"/>
<evidence type="ECO:0000255" key="2">
    <source>
        <dbReference type="PROSITE-ProRule" id="PRU01319"/>
    </source>
</evidence>
<evidence type="ECO:0000305" key="3"/>
<evidence type="ECO:0007829" key="4">
    <source>
        <dbReference type="PDB" id="1UAX"/>
    </source>
</evidence>
<keyword id="KW-0002">3D-structure</keyword>
<keyword id="KW-0963">Cytoplasm</keyword>
<keyword id="KW-0255">Endonuclease</keyword>
<keyword id="KW-0378">Hydrolase</keyword>
<keyword id="KW-0464">Manganese</keyword>
<keyword id="KW-0479">Metal-binding</keyword>
<keyword id="KW-0540">Nuclease</keyword>
<accession>O59351</accession>
<protein>
    <recommendedName>
        <fullName>Ribonuclease HII</fullName>
        <shortName>RNase HII</shortName>
        <ecNumber>3.1.26.4</ecNumber>
    </recommendedName>
</protein>
<gene>
    <name type="primary">rnhB</name>
    <name type="ordered locus">PH1650</name>
</gene>